<sequence length="197" mass="21351">PPMTTETAHISVVSREGDAVVVTTTINYWFGSGLRSPSTGVILNDEMDDFSAHDIQNIYGVPPSKANFIVPGKRPQSSTCPSIFVNEGGDVVMAIGASGGTRITSSVSLTSMRVLWLGRNIKEAIDEPRLHHQLLPDEIEYEFKFPNEILEKLKAIGHKTKPAGAFGSLVVGIKRMKGGTLTANYDYRRGGSVDGFK</sequence>
<dbReference type="EMBL" id="KC144040">
    <property type="status" value="NOT_ANNOTATED_CDS"/>
    <property type="molecule type" value="mRNA"/>
</dbReference>
<dbReference type="SMR" id="P0DPU6"/>
<dbReference type="GO" id="GO:0005576">
    <property type="term" value="C:extracellular region"/>
    <property type="evidence" value="ECO:0007669"/>
    <property type="project" value="UniProtKB-SubCell"/>
</dbReference>
<dbReference type="GO" id="GO:0005886">
    <property type="term" value="C:plasma membrane"/>
    <property type="evidence" value="ECO:0007669"/>
    <property type="project" value="TreeGrafter"/>
</dbReference>
<dbReference type="GO" id="GO:0036374">
    <property type="term" value="F:glutathione hydrolase activity"/>
    <property type="evidence" value="ECO:0007669"/>
    <property type="project" value="InterPro"/>
</dbReference>
<dbReference type="GO" id="GO:0015459">
    <property type="term" value="F:potassium channel regulator activity"/>
    <property type="evidence" value="ECO:0007669"/>
    <property type="project" value="UniProtKB-KW"/>
</dbReference>
<dbReference type="GO" id="GO:0090729">
    <property type="term" value="F:toxin activity"/>
    <property type="evidence" value="ECO:0007669"/>
    <property type="project" value="UniProtKB-KW"/>
</dbReference>
<dbReference type="GO" id="GO:0006751">
    <property type="term" value="P:glutathione catabolic process"/>
    <property type="evidence" value="ECO:0007669"/>
    <property type="project" value="InterPro"/>
</dbReference>
<dbReference type="FunFam" id="3.60.20.40:FF:000001">
    <property type="entry name" value="Gamma-glutamyltranspeptidase 1"/>
    <property type="match status" value="1"/>
</dbReference>
<dbReference type="Gene3D" id="3.60.20.40">
    <property type="match status" value="1"/>
</dbReference>
<dbReference type="InterPro" id="IPR000101">
    <property type="entry name" value="GGT_peptidase"/>
</dbReference>
<dbReference type="InterPro" id="IPR043137">
    <property type="entry name" value="GGT_ssub"/>
</dbReference>
<dbReference type="InterPro" id="IPR029055">
    <property type="entry name" value="Ntn_hydrolases_N"/>
</dbReference>
<dbReference type="PANTHER" id="PTHR11686">
    <property type="entry name" value="GAMMA GLUTAMYL TRANSPEPTIDASE"/>
    <property type="match status" value="1"/>
</dbReference>
<dbReference type="PANTHER" id="PTHR11686:SF9">
    <property type="entry name" value="RE13973P"/>
    <property type="match status" value="1"/>
</dbReference>
<dbReference type="Pfam" id="PF01019">
    <property type="entry name" value="G_glu_transpept"/>
    <property type="match status" value="1"/>
</dbReference>
<dbReference type="PRINTS" id="PR01210">
    <property type="entry name" value="GGTRANSPTASE"/>
</dbReference>
<dbReference type="SUPFAM" id="SSF56235">
    <property type="entry name" value="N-terminal nucleophile aminohydrolases (Ntn hydrolases)"/>
    <property type="match status" value="1"/>
</dbReference>
<comment type="function">
    <text evidence="4">May act as a voltage-gated potassium channel inhibitor. Is highly similar to the subunit beta of SSD14 which, when complexed with subunit alpha, induces platelet aggregation and hemolysis.</text>
</comment>
<comment type="subcellular location">
    <subcellularLocation>
        <location evidence="1">Secreted</location>
    </subcellularLocation>
</comment>
<comment type="tissue specificity">
    <text evidence="4">Expressed by the venom gland.</text>
</comment>
<comment type="mass spectrometry" mass="20667.7" method="MALDI" evidence="1"/>
<comment type="similarity">
    <text evidence="3">Belongs to the scoloptoxin-11 family.</text>
</comment>
<reference key="1">
    <citation type="journal article" date="2012" name="J. Proteome Res.">
        <title>Venomic and transcriptomic analysis of centipede Scolopendra subspinipes dehaani.</title>
        <authorList>
            <person name="Liu Z.C."/>
            <person name="Zhang R."/>
            <person name="Zhao F."/>
            <person name="Chen Z.M."/>
            <person name="Liu H.W."/>
            <person name="Wang Y.J."/>
            <person name="Jiang P."/>
            <person name="Zhang Y."/>
            <person name="Wu Y."/>
            <person name="Ding J.P."/>
            <person name="Lee W.H."/>
            <person name="Zhang Y."/>
        </authorList>
    </citation>
    <scope>NUCLEOTIDE SEQUENCE [MRNA]</scope>
    <scope>PROTEIN SEQUENCE OF 7-29</scope>
    <scope>SUBCELLULAR LOCATION</scope>
    <scope>MASS SPECTROMETRY</scope>
    <scope>FUNCTION</scope>
    <source>
        <tissue>Venom</tissue>
        <tissue>Venom gland</tissue>
    </source>
</reference>
<evidence type="ECO:0000269" key="1">
    <source>
    </source>
</evidence>
<evidence type="ECO:0000303" key="2">
    <source>
    </source>
</evidence>
<evidence type="ECO:0000305" key="3"/>
<evidence type="ECO:0000305" key="4">
    <source>
    </source>
</evidence>
<accession>P0DPU6</accession>
<feature type="signal peptide" evidence="1">
    <location>
        <begin position="1" status="less than"/>
        <end position="6"/>
    </location>
</feature>
<feature type="chain" id="PRO_0000446692" description="Scoloptoxin SSD20" evidence="3">
    <location>
        <begin position="7"/>
        <end position="197"/>
    </location>
</feature>
<feature type="sequence conflict" description="In Ref. 1; AA sequence." evidence="3" ref="1">
    <original>E</original>
    <variation>A</variation>
    <location>
        <position position="16"/>
    </location>
</feature>
<feature type="non-terminal residue">
    <location>
        <position position="1"/>
    </location>
</feature>
<organism>
    <name type="scientific">Scolopendra dehaani</name>
    <name type="common">Thai centipede</name>
    <name type="synonym">Scolopendra subspinipes dehaani</name>
    <dbReference type="NCBI Taxonomy" id="2609776"/>
    <lineage>
        <taxon>Eukaryota</taxon>
        <taxon>Metazoa</taxon>
        <taxon>Ecdysozoa</taxon>
        <taxon>Arthropoda</taxon>
        <taxon>Myriapoda</taxon>
        <taxon>Chilopoda</taxon>
        <taxon>Pleurostigmophora</taxon>
        <taxon>Scolopendromorpha</taxon>
        <taxon>Scolopendridae</taxon>
        <taxon>Scolopendra</taxon>
    </lineage>
</organism>
<name>TX14B_SCODE</name>
<proteinExistence type="evidence at protein level"/>
<keyword id="KW-0903">Direct protein sequencing</keyword>
<keyword id="KW-1199">Hemostasis impairing toxin</keyword>
<keyword id="KW-0872">Ion channel impairing toxin</keyword>
<keyword id="KW-1202">Platelet aggregation activating toxin</keyword>
<keyword id="KW-0632">Potassium channel impairing toxin</keyword>
<keyword id="KW-0964">Secreted</keyword>
<keyword id="KW-0732">Signal</keyword>
<keyword id="KW-0800">Toxin</keyword>
<keyword id="KW-1220">Voltage-gated potassium channel impairing toxin</keyword>
<protein>
    <recommendedName>
        <fullName evidence="2">Scoloptoxin SSD20</fullName>
    </recommendedName>
</protein>